<organism>
    <name type="scientific">Methanococcus maripaludis (strain DSM 14266 / JCM 13030 / NBRC 101832 / S2 / LL)</name>
    <dbReference type="NCBI Taxonomy" id="267377"/>
    <lineage>
        <taxon>Archaea</taxon>
        <taxon>Methanobacteriati</taxon>
        <taxon>Methanobacteriota</taxon>
        <taxon>Methanomada group</taxon>
        <taxon>Methanococci</taxon>
        <taxon>Methanococcales</taxon>
        <taxon>Methanococcaceae</taxon>
        <taxon>Methanococcus</taxon>
    </lineage>
</organism>
<gene>
    <name evidence="1" type="primary">ef1b</name>
    <name type="ordered locus">MMP1401</name>
</gene>
<evidence type="ECO:0000255" key="1">
    <source>
        <dbReference type="HAMAP-Rule" id="MF_00043"/>
    </source>
</evidence>
<comment type="function">
    <text evidence="1">Promotes the exchange of GDP for GTP in EF-1-alpha/GDP, thus allowing the regeneration of EF-1-alpha/GTP that could then be used to form the ternary complex EF-1-alpha/GTP/AAtRNA.</text>
</comment>
<comment type="similarity">
    <text evidence="1">Belongs to the EF-1-beta/EF-1-delta family.</text>
</comment>
<name>EF1B_METMP</name>
<sequence>MATVIAKVKVMPTSPEVEKESLKESLKELVEQNDAKCRGVTDEPLAFGLYTVYVMVEMEEKEGGMDPIEEAMNALENVESAEVVELSLV</sequence>
<keyword id="KW-0251">Elongation factor</keyword>
<keyword id="KW-0648">Protein biosynthesis</keyword>
<keyword id="KW-1185">Reference proteome</keyword>
<protein>
    <recommendedName>
        <fullName evidence="1">Elongation factor 1-beta</fullName>
        <shortName evidence="1">EF-1-beta</shortName>
    </recommendedName>
    <alternativeName>
        <fullName evidence="1">aEF-1beta</fullName>
    </alternativeName>
</protein>
<reference key="1">
    <citation type="journal article" date="2004" name="J. Bacteriol.">
        <title>Complete genome sequence of the genetically tractable hydrogenotrophic methanogen Methanococcus maripaludis.</title>
        <authorList>
            <person name="Hendrickson E.L."/>
            <person name="Kaul R."/>
            <person name="Zhou Y."/>
            <person name="Bovee D."/>
            <person name="Chapman P."/>
            <person name="Chung J."/>
            <person name="Conway de Macario E."/>
            <person name="Dodsworth J.A."/>
            <person name="Gillett W."/>
            <person name="Graham D.E."/>
            <person name="Hackett M."/>
            <person name="Haydock A.K."/>
            <person name="Kang A."/>
            <person name="Land M.L."/>
            <person name="Levy R."/>
            <person name="Lie T.J."/>
            <person name="Major T.A."/>
            <person name="Moore B.C."/>
            <person name="Porat I."/>
            <person name="Palmeiri A."/>
            <person name="Rouse G."/>
            <person name="Saenphimmachak C."/>
            <person name="Soell D."/>
            <person name="Van Dien S."/>
            <person name="Wang T."/>
            <person name="Whitman W.B."/>
            <person name="Xia Q."/>
            <person name="Zhang Y."/>
            <person name="Larimer F.W."/>
            <person name="Olson M.V."/>
            <person name="Leigh J.A."/>
        </authorList>
    </citation>
    <scope>NUCLEOTIDE SEQUENCE [LARGE SCALE GENOMIC DNA]</scope>
    <source>
        <strain>DSM 14266 / JCM 13030 / NBRC 101832 / S2 / LL</strain>
    </source>
</reference>
<accession>Q6LXF0</accession>
<proteinExistence type="inferred from homology"/>
<dbReference type="EMBL" id="BX950229">
    <property type="protein sequence ID" value="CAF30957.1"/>
    <property type="molecule type" value="Genomic_DNA"/>
</dbReference>
<dbReference type="RefSeq" id="WP_011171345.1">
    <property type="nucleotide sequence ID" value="NC_005791.1"/>
</dbReference>
<dbReference type="SMR" id="Q6LXF0"/>
<dbReference type="STRING" id="267377.MMP1401"/>
<dbReference type="EnsemblBacteria" id="CAF30957">
    <property type="protein sequence ID" value="CAF30957"/>
    <property type="gene ID" value="MMP1401"/>
</dbReference>
<dbReference type="KEGG" id="mmp:MMP1401"/>
<dbReference type="PATRIC" id="fig|267377.15.peg.1437"/>
<dbReference type="eggNOG" id="arCOG01988">
    <property type="taxonomic scope" value="Archaea"/>
</dbReference>
<dbReference type="HOGENOM" id="CLU_165896_0_0_2"/>
<dbReference type="Proteomes" id="UP000000590">
    <property type="component" value="Chromosome"/>
</dbReference>
<dbReference type="GO" id="GO:0003746">
    <property type="term" value="F:translation elongation factor activity"/>
    <property type="evidence" value="ECO:0007669"/>
    <property type="project" value="UniProtKB-UniRule"/>
</dbReference>
<dbReference type="Gene3D" id="3.30.70.60">
    <property type="match status" value="1"/>
</dbReference>
<dbReference type="HAMAP" id="MF_00043">
    <property type="entry name" value="EF1_beta"/>
    <property type="match status" value="1"/>
</dbReference>
<dbReference type="InterPro" id="IPR036219">
    <property type="entry name" value="eEF-1beta-like_sf"/>
</dbReference>
<dbReference type="InterPro" id="IPR014038">
    <property type="entry name" value="EF1B_bsu/dsu_GNE"/>
</dbReference>
<dbReference type="InterPro" id="IPR014717">
    <property type="entry name" value="Transl_elong_EF1B/ribsomal_bS6"/>
</dbReference>
<dbReference type="InterPro" id="IPR004542">
    <property type="entry name" value="Transl_elong_EF1B_B_arc"/>
</dbReference>
<dbReference type="NCBIfam" id="TIGR00489">
    <property type="entry name" value="aEF-1_beta"/>
    <property type="match status" value="1"/>
</dbReference>
<dbReference type="NCBIfam" id="NF001670">
    <property type="entry name" value="PRK00435.1"/>
    <property type="match status" value="1"/>
</dbReference>
<dbReference type="PANTHER" id="PTHR39647">
    <property type="entry name" value="ELONGATION FACTOR 1-BETA"/>
    <property type="match status" value="1"/>
</dbReference>
<dbReference type="PANTHER" id="PTHR39647:SF1">
    <property type="entry name" value="ELONGATION FACTOR 1-BETA"/>
    <property type="match status" value="1"/>
</dbReference>
<dbReference type="Pfam" id="PF00736">
    <property type="entry name" value="EF1_GNE"/>
    <property type="match status" value="1"/>
</dbReference>
<dbReference type="PIRSF" id="PIRSF006521">
    <property type="entry name" value="Transl_elong_EF1B_B_arc"/>
    <property type="match status" value="1"/>
</dbReference>
<dbReference type="SMART" id="SM00888">
    <property type="entry name" value="EF1_GNE"/>
    <property type="match status" value="1"/>
</dbReference>
<dbReference type="SUPFAM" id="SSF54984">
    <property type="entry name" value="eEF-1beta-like"/>
    <property type="match status" value="1"/>
</dbReference>
<feature type="chain" id="PRO_0000366426" description="Elongation factor 1-beta">
    <location>
        <begin position="1"/>
        <end position="89"/>
    </location>
</feature>